<name>WOX3B_MAIZE</name>
<feature type="chain" id="PRO_0000049369" description="WUSCHEL-related homeobox 3B">
    <location>
        <begin position="1"/>
        <end position="265"/>
    </location>
</feature>
<feature type="DNA-binding region" description="Homeobox; WUS-type" evidence="1">
    <location>
        <begin position="4"/>
        <end position="68"/>
    </location>
</feature>
<feature type="region of interest" description="Disordered" evidence="2">
    <location>
        <begin position="77"/>
        <end position="107"/>
    </location>
</feature>
<feature type="region of interest" description="Disordered" evidence="2">
    <location>
        <begin position="242"/>
        <end position="265"/>
    </location>
</feature>
<feature type="compositionally biased region" description="Low complexity" evidence="2">
    <location>
        <begin position="254"/>
        <end position="265"/>
    </location>
</feature>
<reference key="1">
    <citation type="journal article" date="2004" name="Development">
        <title>The maize duplicate genes narrow sheath1 and narrow sheath2 encode a conserved homeobox gene function in a lateral domain of shoot apical meristems.</title>
        <authorList>
            <person name="Nardmann J."/>
            <person name="Ji J."/>
            <person name="Werr W."/>
            <person name="Scanlon M.J."/>
        </authorList>
    </citation>
    <scope>NUCLEOTIDE SEQUENCE [GENOMIC DNA / MRNA]</scope>
    <scope>FUNCTION</scope>
    <scope>TISSUE SPECIFICITY</scope>
</reference>
<sequence>MPQTPSTRWCPTPEQLMILEEMYRSGVRTPNAAEIQQITAHLAYYGRIEGKNVFYWFQNHKARERQRLRRRLCARHQQQYAQQQQQATAAAPASSPNSSATLLAPPAAGGSSAPCVHPAVMQLHHHHHPYATSFSMPHLGYLGQQAATVTPVLNPAAAGMVDLAGAGAGNRATGAGGAYGGGAGLYNSCSSNQLEVWDATEPMDHCNASCGAASGSSDEGGAAHLQLPACCRRPLKTLDLFPTKSTGLKDECSSSKSSSCSTSTN</sequence>
<gene>
    <name type="primary">WOX3B</name>
    <name type="synonym">NS2</name>
</gene>
<protein>
    <recommendedName>
        <fullName>WUSCHEL-related homeobox 3B</fullName>
    </recommendedName>
    <alternativeName>
        <fullName>Narrow sheath protein 2</fullName>
    </alternativeName>
</protein>
<comment type="function">
    <text evidence="3">Probable transcription factor required to initiate organ founder cells in a lateral domain of shoot meristems. Involved in leaf formation.</text>
</comment>
<comment type="subcellular location">
    <subcellularLocation>
        <location evidence="1">Nucleus</location>
    </subcellularLocation>
</comment>
<comment type="tissue specificity">
    <text evidence="3">Predominantly expressed in tissues enriched for shoot meristems and young lateral organ primordia. First expressed in lateral domains of shoot meristems. It is then expressed in the margins of young lateral organ primordia. Not expressed in roots, seedling leaves or fully expanded coleoptiles. Also expressed in vegetative shoot apices (five leaf primordia and the SAM) and in the male inflorescence. Expressed at high level in the female inflorescence.</text>
</comment>
<comment type="similarity">
    <text evidence="4">Belongs to the WUS homeobox family.</text>
</comment>
<accession>Q6S3I3</accession>
<dbReference type="EMBL" id="AY472082">
    <property type="protein sequence ID" value="AAR31211.1"/>
    <property type="molecule type" value="mRNA"/>
</dbReference>
<dbReference type="EMBL" id="AY472083">
    <property type="protein sequence ID" value="AAR31212.1"/>
    <property type="molecule type" value="Genomic_DNA"/>
</dbReference>
<dbReference type="RefSeq" id="NP_001105242.1">
    <property type="nucleotide sequence ID" value="NM_001111772.1"/>
</dbReference>
<dbReference type="SMR" id="Q6S3I3"/>
<dbReference type="FunCoup" id="Q6S3I3">
    <property type="interactions" value="59"/>
</dbReference>
<dbReference type="STRING" id="4577.Q6S3I3"/>
<dbReference type="GeneID" id="542147"/>
<dbReference type="KEGG" id="zma:542147"/>
<dbReference type="MaizeGDB" id="104331"/>
<dbReference type="InParanoid" id="Q6S3I3"/>
<dbReference type="OrthoDB" id="1932526at2759"/>
<dbReference type="Proteomes" id="UP000007305">
    <property type="component" value="Unplaced"/>
</dbReference>
<dbReference type="ExpressionAtlas" id="Q6S3I3">
    <property type="expression patterns" value="baseline and differential"/>
</dbReference>
<dbReference type="GO" id="GO:0005634">
    <property type="term" value="C:nucleus"/>
    <property type="evidence" value="ECO:0007669"/>
    <property type="project" value="UniProtKB-SubCell"/>
</dbReference>
<dbReference type="GO" id="GO:0003677">
    <property type="term" value="F:DNA binding"/>
    <property type="evidence" value="ECO:0007669"/>
    <property type="project" value="UniProtKB-KW"/>
</dbReference>
<dbReference type="GO" id="GO:0003700">
    <property type="term" value="F:DNA-binding transcription factor activity"/>
    <property type="evidence" value="ECO:0007669"/>
    <property type="project" value="InterPro"/>
</dbReference>
<dbReference type="GO" id="GO:0099402">
    <property type="term" value="P:plant organ development"/>
    <property type="evidence" value="ECO:0007669"/>
    <property type="project" value="InterPro"/>
</dbReference>
<dbReference type="CDD" id="cd00086">
    <property type="entry name" value="homeodomain"/>
    <property type="match status" value="1"/>
</dbReference>
<dbReference type="FunFam" id="1.10.10.60:FF:000118">
    <property type="entry name" value="WUSCHEL-related homeobox 11"/>
    <property type="match status" value="1"/>
</dbReference>
<dbReference type="Gene3D" id="1.10.10.60">
    <property type="entry name" value="Homeodomain-like"/>
    <property type="match status" value="1"/>
</dbReference>
<dbReference type="InterPro" id="IPR001356">
    <property type="entry name" value="HD"/>
</dbReference>
<dbReference type="InterPro" id="IPR009057">
    <property type="entry name" value="Homeodomain-like_sf"/>
</dbReference>
<dbReference type="InterPro" id="IPR044555">
    <property type="entry name" value="WUSCHEL-like"/>
</dbReference>
<dbReference type="PANTHER" id="PTHR45940">
    <property type="entry name" value="WUSCHEL-RELATED HOMEOBOX 1-RELATED"/>
    <property type="match status" value="1"/>
</dbReference>
<dbReference type="PANTHER" id="PTHR45940:SF42">
    <property type="entry name" value="WUSCHEL-RELATED HOMEOBOX 3"/>
    <property type="match status" value="1"/>
</dbReference>
<dbReference type="Pfam" id="PF00046">
    <property type="entry name" value="Homeodomain"/>
    <property type="match status" value="1"/>
</dbReference>
<dbReference type="SMART" id="SM00389">
    <property type="entry name" value="HOX"/>
    <property type="match status" value="1"/>
</dbReference>
<dbReference type="SUPFAM" id="SSF46689">
    <property type="entry name" value="Homeodomain-like"/>
    <property type="match status" value="1"/>
</dbReference>
<dbReference type="PROSITE" id="PS50071">
    <property type="entry name" value="HOMEOBOX_2"/>
    <property type="match status" value="1"/>
</dbReference>
<organism>
    <name type="scientific">Zea mays</name>
    <name type="common">Maize</name>
    <dbReference type="NCBI Taxonomy" id="4577"/>
    <lineage>
        <taxon>Eukaryota</taxon>
        <taxon>Viridiplantae</taxon>
        <taxon>Streptophyta</taxon>
        <taxon>Embryophyta</taxon>
        <taxon>Tracheophyta</taxon>
        <taxon>Spermatophyta</taxon>
        <taxon>Magnoliopsida</taxon>
        <taxon>Liliopsida</taxon>
        <taxon>Poales</taxon>
        <taxon>Poaceae</taxon>
        <taxon>PACMAD clade</taxon>
        <taxon>Panicoideae</taxon>
        <taxon>Andropogonodae</taxon>
        <taxon>Andropogoneae</taxon>
        <taxon>Tripsacinae</taxon>
        <taxon>Zea</taxon>
    </lineage>
</organism>
<keyword id="KW-0217">Developmental protein</keyword>
<keyword id="KW-0238">DNA-binding</keyword>
<keyword id="KW-0371">Homeobox</keyword>
<keyword id="KW-0539">Nucleus</keyword>
<keyword id="KW-1185">Reference proteome</keyword>
<keyword id="KW-0804">Transcription</keyword>
<keyword id="KW-0805">Transcription regulation</keyword>
<proteinExistence type="evidence at transcript level"/>
<evidence type="ECO:0000255" key="1">
    <source>
        <dbReference type="PROSITE-ProRule" id="PRU00108"/>
    </source>
</evidence>
<evidence type="ECO:0000256" key="2">
    <source>
        <dbReference type="SAM" id="MobiDB-lite"/>
    </source>
</evidence>
<evidence type="ECO:0000269" key="3">
    <source>
    </source>
</evidence>
<evidence type="ECO:0000305" key="4"/>